<dbReference type="EC" id="4.1.2.45"/>
<dbReference type="EMBL" id="U09057">
    <property type="protein sequence ID" value="AAA66357.1"/>
    <property type="molecule type" value="Genomic_DNA"/>
</dbReference>
<dbReference type="PIR" id="B55552">
    <property type="entry name" value="B55552"/>
</dbReference>
<dbReference type="RefSeq" id="WP_011475383.1">
    <property type="nucleotide sequence ID" value="NC_007926.1"/>
</dbReference>
<dbReference type="RefSeq" id="YP_534828.1">
    <property type="nucleotide sequence ID" value="NC_007926.1"/>
</dbReference>
<dbReference type="PDB" id="6DAO">
    <property type="method" value="X-ray"/>
    <property type="resolution" value="1.94 A"/>
    <property type="chains" value="A/B=1-331"/>
</dbReference>
<dbReference type="PDBsum" id="6DAO"/>
<dbReference type="SMR" id="Q51947"/>
<dbReference type="KEGG" id="ag:AAA66357"/>
<dbReference type="BRENDA" id="4.1.2.45">
    <property type="organism ID" value="5092"/>
</dbReference>
<dbReference type="UniPathway" id="UPA00082"/>
<dbReference type="GO" id="GO:0008840">
    <property type="term" value="F:4-hydroxy-tetrahydrodipicolinate synthase activity"/>
    <property type="evidence" value="ECO:0007669"/>
    <property type="project" value="TreeGrafter"/>
</dbReference>
<dbReference type="GO" id="GO:0016832">
    <property type="term" value="F:aldehyde-lyase activity"/>
    <property type="evidence" value="ECO:0000314"/>
    <property type="project" value="UniProtKB"/>
</dbReference>
<dbReference type="GO" id="GO:0018813">
    <property type="term" value="F:trans-o-hydroxybenzylidenepyruvate hydratase-aldolase activity"/>
    <property type="evidence" value="ECO:0007669"/>
    <property type="project" value="UniProtKB-EC"/>
</dbReference>
<dbReference type="GO" id="GO:1901170">
    <property type="term" value="P:naphthalene catabolic process"/>
    <property type="evidence" value="ECO:0000315"/>
    <property type="project" value="UniProtKB"/>
</dbReference>
<dbReference type="CDD" id="cd00952">
    <property type="entry name" value="CHBPH_aldolase"/>
    <property type="match status" value="1"/>
</dbReference>
<dbReference type="FunFam" id="3.20.20.70:FF:000190">
    <property type="entry name" value="Trans-o-hydroxybenzylidenepyruvate hydratase-aldolase"/>
    <property type="match status" value="1"/>
</dbReference>
<dbReference type="Gene3D" id="3.20.20.70">
    <property type="entry name" value="Aldolase class I"/>
    <property type="match status" value="1"/>
</dbReference>
<dbReference type="InterPro" id="IPR013785">
    <property type="entry name" value="Aldolase_TIM"/>
</dbReference>
<dbReference type="InterPro" id="IPR002220">
    <property type="entry name" value="DapA-like"/>
</dbReference>
<dbReference type="InterPro" id="IPR048038">
    <property type="entry name" value="HBPHA/CBPHA"/>
</dbReference>
<dbReference type="PANTHER" id="PTHR12128:SF66">
    <property type="entry name" value="4-HYDROXY-2-OXOGLUTARATE ALDOLASE, MITOCHONDRIAL"/>
    <property type="match status" value="1"/>
</dbReference>
<dbReference type="PANTHER" id="PTHR12128">
    <property type="entry name" value="DIHYDRODIPICOLINATE SYNTHASE"/>
    <property type="match status" value="1"/>
</dbReference>
<dbReference type="Pfam" id="PF00701">
    <property type="entry name" value="DHDPS"/>
    <property type="match status" value="1"/>
</dbReference>
<dbReference type="PIRSF" id="PIRSF001365">
    <property type="entry name" value="DHDPS"/>
    <property type="match status" value="1"/>
</dbReference>
<dbReference type="PRINTS" id="PR00146">
    <property type="entry name" value="DHPICSNTHASE"/>
</dbReference>
<dbReference type="SMART" id="SM01130">
    <property type="entry name" value="DHDPS"/>
    <property type="match status" value="1"/>
</dbReference>
<dbReference type="SUPFAM" id="SSF51569">
    <property type="entry name" value="Aldolase"/>
    <property type="match status" value="1"/>
</dbReference>
<evidence type="ECO:0000269" key="1">
    <source>
    </source>
</evidence>
<evidence type="ECO:0000269" key="2">
    <source>
    </source>
</evidence>
<evidence type="ECO:0000305" key="3"/>
<evidence type="ECO:0007829" key="4">
    <source>
        <dbReference type="PDB" id="6DAO"/>
    </source>
</evidence>
<comment type="function">
    <text evidence="1 2">Involved in the naphthalene upper catabolic pathway. Catalyzes the transformation of trans-O-hydroxybenzylidenepyruvate (THBPA) to salicylaldehyde and pyruvate. The reaction is reversible. Can also use substrate which carry trans-alpha,beta-unsaturated keto acid side chain and adjacent hydroxyl group such as trans-4-(3-hydroxy-2-thianaphthenyl)-2-oxo-but-3-enoate, trans-4-(3-hydroxy-2-benzofuranyl)-2-oxobut-3-enoate, and trans-4-(3-hydroxy-2-thienyl)-2-oxobut-3-enoate.</text>
</comment>
<comment type="catalytic activity">
    <reaction evidence="1">
        <text>(3E)-4-(2-hydroxyphenyl)-2-oxobut-3-enoate + H2O = salicylaldehyde + pyruvate</text>
        <dbReference type="Rhea" id="RHEA:27389"/>
        <dbReference type="ChEBI" id="CHEBI:15361"/>
        <dbReference type="ChEBI" id="CHEBI:15377"/>
        <dbReference type="ChEBI" id="CHEBI:16008"/>
        <dbReference type="ChEBI" id="CHEBI:59353"/>
        <dbReference type="EC" id="4.1.2.45"/>
    </reaction>
</comment>
<comment type="pathway">
    <text>Aromatic compound metabolism; naphthalene degradation.</text>
</comment>
<comment type="similarity">
    <text evidence="3">Belongs to the DapA family.</text>
</comment>
<reference key="1">
    <citation type="journal article" date="1994" name="J. Bacteriol.">
        <title>Organization and evolution of naphthalene catabolic pathways: sequence of the DNA encoding 2-hydroxychromene-2-carboxylate isomerase and trans-o-hydroxybenzylidenepyruvate hydratase-aldolase from the NAH7 plasmid.</title>
        <authorList>
            <person name="Eaton R.W."/>
        </authorList>
    </citation>
    <scope>NUCLEOTIDE SEQUENCE [GENOMIC DNA]</scope>
    <scope>FUNCTION</scope>
    <scope>NOMENCLATURE</scope>
    <source>
        <strain>ATCC 17485 / DSM 50208 / JCM 6158 / NCIMB 12092 / Stanier 111 / Biotype A</strain>
    </source>
</reference>
<reference key="2">
    <citation type="journal article" date="1992" name="J. Bacteriol.">
        <title>Bacterial metabolism of naphthalene: construction and use of recombinant bacteria to study ring cleavage of 1,2-dihydroxynaphthalene and subsequent reactions.</title>
        <authorList>
            <person name="Eaton R.W."/>
            <person name="Chapman P.J."/>
        </authorList>
    </citation>
    <scope>FUNCTION</scope>
    <scope>CATALYTIC ACTIVITY</scope>
    <scope>SUBSTRATE SPECIFICITY</scope>
    <source>
        <strain>ATCC 17485 / DSM 50208 / JCM 6158 / NCIMB 12092 / Stanier 111 / Biotype A</strain>
    </source>
</reference>
<protein>
    <recommendedName>
        <fullName>Trans-O-hydroxybenzylidenepyruvate hydratase-aldolase</fullName>
        <shortName>THBPA hydratase-aldolase</shortName>
        <ecNumber>4.1.2.45</ecNumber>
    </recommendedName>
    <alternativeName>
        <fullName>2'-hydroxybenzalpyruvate aldolase</fullName>
    </alternativeName>
</protein>
<geneLocation type="plasmid">
    <name>NAH7</name>
</geneLocation>
<feature type="chain" id="PRO_0000096702" description="Trans-O-hydroxybenzylidenepyruvate hydratase-aldolase">
    <location>
        <begin position="1"/>
        <end position="331"/>
    </location>
</feature>
<feature type="helix" evidence="4">
    <location>
        <begin position="13"/>
        <end position="15"/>
    </location>
</feature>
<feature type="strand" evidence="4">
    <location>
        <begin position="18"/>
        <end position="23"/>
    </location>
</feature>
<feature type="turn" evidence="4">
    <location>
        <begin position="29"/>
        <end position="32"/>
    </location>
</feature>
<feature type="helix" evidence="4">
    <location>
        <begin position="42"/>
        <end position="55"/>
    </location>
</feature>
<feature type="strand" evidence="4">
    <location>
        <begin position="58"/>
        <end position="62"/>
    </location>
</feature>
<feature type="turn" evidence="4">
    <location>
        <begin position="65"/>
        <end position="71"/>
    </location>
</feature>
<feature type="helix" evidence="4">
    <location>
        <begin position="74"/>
        <end position="88"/>
    </location>
</feature>
<feature type="strand" evidence="4">
    <location>
        <begin position="94"/>
        <end position="97"/>
    </location>
</feature>
<feature type="helix" evidence="4">
    <location>
        <begin position="103"/>
        <end position="116"/>
    </location>
</feature>
<feature type="strand" evidence="4">
    <location>
        <begin position="119"/>
        <end position="123"/>
    </location>
</feature>
<feature type="helix" evidence="4">
    <location>
        <begin position="133"/>
        <end position="146"/>
    </location>
</feature>
<feature type="strand" evidence="4">
    <location>
        <begin position="150"/>
        <end position="155"/>
    </location>
</feature>
<feature type="helix" evidence="4">
    <location>
        <begin position="158"/>
        <end position="161"/>
    </location>
</feature>
<feature type="helix" evidence="4">
    <location>
        <begin position="167"/>
        <end position="174"/>
    </location>
</feature>
<feature type="strand" evidence="4">
    <location>
        <begin position="179"/>
        <end position="183"/>
    </location>
</feature>
<feature type="helix" evidence="4">
    <location>
        <begin position="190"/>
        <end position="196"/>
    </location>
</feature>
<feature type="strand" evidence="4">
    <location>
        <begin position="201"/>
        <end position="203"/>
    </location>
</feature>
<feature type="helix" evidence="4">
    <location>
        <begin position="206"/>
        <end position="215"/>
    </location>
</feature>
<feature type="turn" evidence="4">
    <location>
        <begin position="217"/>
        <end position="219"/>
    </location>
</feature>
<feature type="strand" evidence="4">
    <location>
        <begin position="222"/>
        <end position="226"/>
    </location>
</feature>
<feature type="helix" evidence="4">
    <location>
        <begin position="227"/>
        <end position="230"/>
    </location>
</feature>
<feature type="helix" evidence="4">
    <location>
        <begin position="233"/>
        <end position="248"/>
    </location>
</feature>
<feature type="helix" evidence="4">
    <location>
        <begin position="252"/>
        <end position="264"/>
    </location>
</feature>
<feature type="turn" evidence="4">
    <location>
        <begin position="265"/>
        <end position="268"/>
    </location>
</feature>
<feature type="helix" evidence="4">
    <location>
        <begin position="270"/>
        <end position="272"/>
    </location>
</feature>
<feature type="helix" evidence="4">
    <location>
        <begin position="274"/>
        <end position="279"/>
    </location>
</feature>
<feature type="helix" evidence="4">
    <location>
        <begin position="281"/>
        <end position="292"/>
    </location>
</feature>
<feature type="helix" evidence="4">
    <location>
        <begin position="309"/>
        <end position="328"/>
    </location>
</feature>
<name>NAHE1_PSEPU</name>
<organism>
    <name type="scientific">Pseudomonas putida</name>
    <name type="common">Arthrobacter siderocapsulatus</name>
    <dbReference type="NCBI Taxonomy" id="303"/>
    <lineage>
        <taxon>Bacteria</taxon>
        <taxon>Pseudomonadati</taxon>
        <taxon>Pseudomonadota</taxon>
        <taxon>Gammaproteobacteria</taxon>
        <taxon>Pseudomonadales</taxon>
        <taxon>Pseudomonadaceae</taxon>
        <taxon>Pseudomonas</taxon>
    </lineage>
</organism>
<keyword id="KW-0002">3D-structure</keyword>
<keyword id="KW-0058">Aromatic hydrocarbons catabolism</keyword>
<keyword id="KW-0456">Lyase</keyword>
<keyword id="KW-0614">Plasmid</keyword>
<keyword id="KW-0670">Pyruvate</keyword>
<proteinExistence type="evidence at protein level"/>
<gene>
    <name type="primary">nahE</name>
</gene>
<accession>Q51947</accession>
<sequence>MLNKVIKTTRLTAEDINGAWTIMPTPSTPDASDWRSTNTVDLDETARIVEELIAAGVNGILSMGTFGECATLTWEEKRDYVSTVVETIRGRVPYFCGTTALNTREVIRQTRELIDIGANGTMLGVPMWVKMDLPTAVQFYRDVAGAVPEAAIAIYANPEAFKFDFPRPFWAEMSKIPQVVTAKYLGIGMLDLDLKLAPNIRFLPHEDDYYAAARINPERITAFWSSGAMCGPATAIMLRDEVERAKSTGDWIKAKAISDDMRAADSTLFPRGDFSEFSKYNIGLEKARMDAAGWLKAGPCRPPYNLVPEDYLVGAQKSGKAWAALHAKYSK</sequence>